<name>KDSB_PROMH</name>
<comment type="function">
    <text evidence="1">Activates KDO (a required 8-carbon sugar) for incorporation into bacterial lipopolysaccharide in Gram-negative bacteria.</text>
</comment>
<comment type="catalytic activity">
    <reaction evidence="1">
        <text>3-deoxy-alpha-D-manno-oct-2-ulosonate + CTP = CMP-3-deoxy-beta-D-manno-octulosonate + diphosphate</text>
        <dbReference type="Rhea" id="RHEA:23448"/>
        <dbReference type="ChEBI" id="CHEBI:33019"/>
        <dbReference type="ChEBI" id="CHEBI:37563"/>
        <dbReference type="ChEBI" id="CHEBI:85986"/>
        <dbReference type="ChEBI" id="CHEBI:85987"/>
        <dbReference type="EC" id="2.7.7.38"/>
    </reaction>
</comment>
<comment type="pathway">
    <text evidence="1">Nucleotide-sugar biosynthesis; CMP-3-deoxy-D-manno-octulosonate biosynthesis; CMP-3-deoxy-D-manno-octulosonate from 3-deoxy-D-manno-octulosonate and CTP: step 1/1.</text>
</comment>
<comment type="pathway">
    <text evidence="1">Bacterial outer membrane biogenesis; lipopolysaccharide biosynthesis.</text>
</comment>
<comment type="subcellular location">
    <subcellularLocation>
        <location evidence="1">Cytoplasm</location>
    </subcellularLocation>
</comment>
<comment type="similarity">
    <text evidence="1">Belongs to the KdsB family.</text>
</comment>
<dbReference type="EC" id="2.7.7.38" evidence="1"/>
<dbReference type="EMBL" id="AM942759">
    <property type="protein sequence ID" value="CAR41688.1"/>
    <property type="molecule type" value="Genomic_DNA"/>
</dbReference>
<dbReference type="RefSeq" id="WP_004244594.1">
    <property type="nucleotide sequence ID" value="NC_010554.1"/>
</dbReference>
<dbReference type="SMR" id="B4ET34"/>
<dbReference type="EnsemblBacteria" id="CAR41688">
    <property type="protein sequence ID" value="CAR41688"/>
    <property type="gene ID" value="PMI0722"/>
</dbReference>
<dbReference type="GeneID" id="6800656"/>
<dbReference type="KEGG" id="pmr:PMI0722"/>
<dbReference type="eggNOG" id="COG1212">
    <property type="taxonomic scope" value="Bacteria"/>
</dbReference>
<dbReference type="HOGENOM" id="CLU_065038_1_0_6"/>
<dbReference type="UniPathway" id="UPA00030"/>
<dbReference type="UniPathway" id="UPA00358">
    <property type="reaction ID" value="UER00476"/>
</dbReference>
<dbReference type="Proteomes" id="UP000008319">
    <property type="component" value="Chromosome"/>
</dbReference>
<dbReference type="GO" id="GO:0005829">
    <property type="term" value="C:cytosol"/>
    <property type="evidence" value="ECO:0007669"/>
    <property type="project" value="TreeGrafter"/>
</dbReference>
<dbReference type="GO" id="GO:0008690">
    <property type="term" value="F:3-deoxy-manno-octulosonate cytidylyltransferase activity"/>
    <property type="evidence" value="ECO:0007669"/>
    <property type="project" value="UniProtKB-UniRule"/>
</dbReference>
<dbReference type="GO" id="GO:0033468">
    <property type="term" value="P:CMP-keto-3-deoxy-D-manno-octulosonic acid biosynthetic process"/>
    <property type="evidence" value="ECO:0007669"/>
    <property type="project" value="UniProtKB-UniRule"/>
</dbReference>
<dbReference type="GO" id="GO:0009103">
    <property type="term" value="P:lipopolysaccharide biosynthetic process"/>
    <property type="evidence" value="ECO:0007669"/>
    <property type="project" value="UniProtKB-UniRule"/>
</dbReference>
<dbReference type="CDD" id="cd02517">
    <property type="entry name" value="CMP-KDO-Synthetase"/>
    <property type="match status" value="1"/>
</dbReference>
<dbReference type="FunFam" id="3.90.550.10:FF:000011">
    <property type="entry name" value="3-deoxy-manno-octulosonate cytidylyltransferase"/>
    <property type="match status" value="1"/>
</dbReference>
<dbReference type="Gene3D" id="3.90.550.10">
    <property type="entry name" value="Spore Coat Polysaccharide Biosynthesis Protein SpsA, Chain A"/>
    <property type="match status" value="1"/>
</dbReference>
<dbReference type="HAMAP" id="MF_00057">
    <property type="entry name" value="KdsB"/>
    <property type="match status" value="1"/>
</dbReference>
<dbReference type="InterPro" id="IPR003329">
    <property type="entry name" value="Cytidylyl_trans"/>
</dbReference>
<dbReference type="InterPro" id="IPR004528">
    <property type="entry name" value="KdsB"/>
</dbReference>
<dbReference type="InterPro" id="IPR029044">
    <property type="entry name" value="Nucleotide-diphossugar_trans"/>
</dbReference>
<dbReference type="NCBIfam" id="TIGR00466">
    <property type="entry name" value="kdsB"/>
    <property type="match status" value="1"/>
</dbReference>
<dbReference type="NCBIfam" id="NF003950">
    <property type="entry name" value="PRK05450.1-3"/>
    <property type="match status" value="1"/>
</dbReference>
<dbReference type="NCBIfam" id="NF003952">
    <property type="entry name" value="PRK05450.1-5"/>
    <property type="match status" value="1"/>
</dbReference>
<dbReference type="NCBIfam" id="NF009905">
    <property type="entry name" value="PRK13368.1"/>
    <property type="match status" value="1"/>
</dbReference>
<dbReference type="PANTHER" id="PTHR42866">
    <property type="entry name" value="3-DEOXY-MANNO-OCTULOSONATE CYTIDYLYLTRANSFERASE"/>
    <property type="match status" value="1"/>
</dbReference>
<dbReference type="PANTHER" id="PTHR42866:SF2">
    <property type="entry name" value="3-DEOXY-MANNO-OCTULOSONATE CYTIDYLYLTRANSFERASE, MITOCHONDRIAL"/>
    <property type="match status" value="1"/>
</dbReference>
<dbReference type="Pfam" id="PF02348">
    <property type="entry name" value="CTP_transf_3"/>
    <property type="match status" value="1"/>
</dbReference>
<dbReference type="SUPFAM" id="SSF53448">
    <property type="entry name" value="Nucleotide-diphospho-sugar transferases"/>
    <property type="match status" value="1"/>
</dbReference>
<organism>
    <name type="scientific">Proteus mirabilis (strain HI4320)</name>
    <dbReference type="NCBI Taxonomy" id="529507"/>
    <lineage>
        <taxon>Bacteria</taxon>
        <taxon>Pseudomonadati</taxon>
        <taxon>Pseudomonadota</taxon>
        <taxon>Gammaproteobacteria</taxon>
        <taxon>Enterobacterales</taxon>
        <taxon>Morganellaceae</taxon>
        <taxon>Proteus</taxon>
    </lineage>
</organism>
<feature type="chain" id="PRO_0000370120" description="3-deoxy-manno-octulosonate cytidylyltransferase">
    <location>
        <begin position="1"/>
        <end position="253"/>
    </location>
</feature>
<keyword id="KW-0963">Cytoplasm</keyword>
<keyword id="KW-0448">Lipopolysaccharide biosynthesis</keyword>
<keyword id="KW-0548">Nucleotidyltransferase</keyword>
<keyword id="KW-1185">Reference proteome</keyword>
<keyword id="KW-0808">Transferase</keyword>
<accession>B4ET34</accession>
<evidence type="ECO:0000255" key="1">
    <source>
        <dbReference type="HAMAP-Rule" id="MF_00057"/>
    </source>
</evidence>
<sequence>MFTVIIPGRYASTRLPGKPLADIHGKPMIVRVMEQAKRSGAKRVIVATDNLDVVRAVEQAGGEACMTREDHHSGTERLAEVIEKYQFADDEIIVNVQGDEPLIPPAIITQVAENLANCGAGMATLAVPIVDSKEAFNPNAVKVVMDAKGFALYFSRATIPWERDRFNLSHDEIGEHYLRHIGIYAYRAGFIRRYITWEPSPLESIEMLEQLRVLWYGEKIHVAKALEVPGVGVDTQDDLIAARAAFRALNQEF</sequence>
<protein>
    <recommendedName>
        <fullName evidence="1">3-deoxy-manno-octulosonate cytidylyltransferase</fullName>
        <ecNumber evidence="1">2.7.7.38</ecNumber>
    </recommendedName>
    <alternativeName>
        <fullName evidence="1">CMP-2-keto-3-deoxyoctulosonic acid synthase</fullName>
        <shortName evidence="1">CKS</shortName>
        <shortName evidence="1">CMP-KDO synthase</shortName>
    </alternativeName>
</protein>
<gene>
    <name evidence="1" type="primary">kdsB</name>
    <name type="ordered locus">PMI0722</name>
</gene>
<proteinExistence type="inferred from homology"/>
<reference key="1">
    <citation type="journal article" date="2008" name="J. Bacteriol.">
        <title>Complete genome sequence of uropathogenic Proteus mirabilis, a master of both adherence and motility.</title>
        <authorList>
            <person name="Pearson M.M."/>
            <person name="Sebaihia M."/>
            <person name="Churcher C."/>
            <person name="Quail M.A."/>
            <person name="Seshasayee A.S."/>
            <person name="Luscombe N.M."/>
            <person name="Abdellah Z."/>
            <person name="Arrosmith C."/>
            <person name="Atkin B."/>
            <person name="Chillingworth T."/>
            <person name="Hauser H."/>
            <person name="Jagels K."/>
            <person name="Moule S."/>
            <person name="Mungall K."/>
            <person name="Norbertczak H."/>
            <person name="Rabbinowitsch E."/>
            <person name="Walker D."/>
            <person name="Whithead S."/>
            <person name="Thomson N.R."/>
            <person name="Rather P.N."/>
            <person name="Parkhill J."/>
            <person name="Mobley H.L.T."/>
        </authorList>
    </citation>
    <scope>NUCLEOTIDE SEQUENCE [LARGE SCALE GENOMIC DNA]</scope>
    <source>
        <strain>HI4320</strain>
    </source>
</reference>